<keyword id="KW-0053">Apoptosis</keyword>
<keyword id="KW-0175">Coiled coil</keyword>
<keyword id="KW-0256">Endoplasmic reticulum</keyword>
<keyword id="KW-0931">ER-Golgi transport</keyword>
<keyword id="KW-0472">Membrane</keyword>
<keyword id="KW-0496">Mitochondrion</keyword>
<keyword id="KW-0653">Protein transport</keyword>
<keyword id="KW-1185">Reference proteome</keyword>
<keyword id="KW-0812">Transmembrane</keyword>
<keyword id="KW-1133">Transmembrane helix</keyword>
<keyword id="KW-0813">Transport</keyword>
<keyword id="KW-0832">Ubl conjugation</keyword>
<dbReference type="EMBL" id="AF454391">
    <property type="protein sequence ID" value="AAL50991.1"/>
    <property type="molecule type" value="mRNA"/>
</dbReference>
<dbReference type="RefSeq" id="NP_543173.1">
    <property type="nucleotide sequence ID" value="NM_080897.1"/>
</dbReference>
<dbReference type="SMR" id="Q8VHI8"/>
<dbReference type="FunCoup" id="Q8VHI8">
    <property type="interactions" value="2266"/>
</dbReference>
<dbReference type="IntAct" id="Q8VHI8">
    <property type="interactions" value="3"/>
</dbReference>
<dbReference type="STRING" id="10116.ENSRNOP00000028173"/>
<dbReference type="PhosphoSitePlus" id="Q8VHI8"/>
<dbReference type="jPOST" id="Q8VHI8"/>
<dbReference type="PaxDb" id="10116-ENSRNOP00000028173"/>
<dbReference type="GeneID" id="140932"/>
<dbReference type="KEGG" id="rno:140932"/>
<dbReference type="UCSC" id="RGD:620799">
    <property type="organism name" value="rat"/>
</dbReference>
<dbReference type="AGR" id="RGD:620799"/>
<dbReference type="CTD" id="662"/>
<dbReference type="RGD" id="620799">
    <property type="gene designation" value="Bnip1"/>
</dbReference>
<dbReference type="VEuPathDB" id="HostDB:ENSRNOG00000020753"/>
<dbReference type="eggNOG" id="ENOG502QUTT">
    <property type="taxonomic scope" value="Eukaryota"/>
</dbReference>
<dbReference type="HOGENOM" id="CLU_105902_0_0_1"/>
<dbReference type="InParanoid" id="Q8VHI8"/>
<dbReference type="OrthoDB" id="46868at2759"/>
<dbReference type="PhylomeDB" id="Q8VHI8"/>
<dbReference type="TreeFam" id="TF324339"/>
<dbReference type="Reactome" id="R-RNO-6811434">
    <property type="pathway name" value="COPI-dependent Golgi-to-ER retrograde traffic"/>
</dbReference>
<dbReference type="PRO" id="PR:Q8VHI8"/>
<dbReference type="Proteomes" id="UP000002494">
    <property type="component" value="Chromosome 10"/>
</dbReference>
<dbReference type="Bgee" id="ENSRNOG00000020753">
    <property type="expression patterns" value="Expressed in quadriceps femoris and 20 other cell types or tissues"/>
</dbReference>
<dbReference type="GO" id="GO:0030137">
    <property type="term" value="C:COPI-coated vesicle"/>
    <property type="evidence" value="ECO:0000314"/>
    <property type="project" value="RGD"/>
</dbReference>
<dbReference type="GO" id="GO:0005737">
    <property type="term" value="C:cytoplasm"/>
    <property type="evidence" value="ECO:0000266"/>
    <property type="project" value="RGD"/>
</dbReference>
<dbReference type="GO" id="GO:0005783">
    <property type="term" value="C:endoplasmic reticulum"/>
    <property type="evidence" value="ECO:0000250"/>
    <property type="project" value="HGNC-UCL"/>
</dbReference>
<dbReference type="GO" id="GO:0005789">
    <property type="term" value="C:endoplasmic reticulum membrane"/>
    <property type="evidence" value="ECO:0000266"/>
    <property type="project" value="RGD"/>
</dbReference>
<dbReference type="GO" id="GO:0043231">
    <property type="term" value="C:intracellular membrane-bounded organelle"/>
    <property type="evidence" value="ECO:0000250"/>
    <property type="project" value="UniProtKB"/>
</dbReference>
<dbReference type="GO" id="GO:0031966">
    <property type="term" value="C:mitochondrial membrane"/>
    <property type="evidence" value="ECO:0000266"/>
    <property type="project" value="RGD"/>
</dbReference>
<dbReference type="GO" id="GO:0005741">
    <property type="term" value="C:mitochondrial outer membrane"/>
    <property type="evidence" value="ECO:0000266"/>
    <property type="project" value="RGD"/>
</dbReference>
<dbReference type="GO" id="GO:0005635">
    <property type="term" value="C:nuclear envelope"/>
    <property type="evidence" value="ECO:0000250"/>
    <property type="project" value="UniProtKB"/>
</dbReference>
<dbReference type="GO" id="GO:0031201">
    <property type="term" value="C:SNARE complex"/>
    <property type="evidence" value="ECO:0000314"/>
    <property type="project" value="RGD"/>
</dbReference>
<dbReference type="GO" id="GO:0048763">
    <property type="term" value="F:calcium-induced calcium release activity"/>
    <property type="evidence" value="ECO:0000266"/>
    <property type="project" value="RGD"/>
</dbReference>
<dbReference type="GO" id="GO:0005484">
    <property type="term" value="F:SNAP receptor activity"/>
    <property type="evidence" value="ECO:0000266"/>
    <property type="project" value="RGD"/>
</dbReference>
<dbReference type="GO" id="GO:0006915">
    <property type="term" value="P:apoptotic process"/>
    <property type="evidence" value="ECO:0000266"/>
    <property type="project" value="RGD"/>
</dbReference>
<dbReference type="GO" id="GO:0140208">
    <property type="term" value="P:apoptotic process in response to mitochondrial fragmentation"/>
    <property type="evidence" value="ECO:0000266"/>
    <property type="project" value="RGD"/>
</dbReference>
<dbReference type="GO" id="GO:0016320">
    <property type="term" value="P:endoplasmic reticulum membrane fusion"/>
    <property type="evidence" value="ECO:0000250"/>
    <property type="project" value="HGNC-UCL"/>
</dbReference>
<dbReference type="GO" id="GO:0007029">
    <property type="term" value="P:endoplasmic reticulum organization"/>
    <property type="evidence" value="ECO:0000250"/>
    <property type="project" value="HGNC-UCL"/>
</dbReference>
<dbReference type="GO" id="GO:0015031">
    <property type="term" value="P:protein transport"/>
    <property type="evidence" value="ECO:0007669"/>
    <property type="project" value="UniProtKB-KW"/>
</dbReference>
<dbReference type="GO" id="GO:0014823">
    <property type="term" value="P:response to activity"/>
    <property type="evidence" value="ECO:0000270"/>
    <property type="project" value="RGD"/>
</dbReference>
<dbReference type="GO" id="GO:0090649">
    <property type="term" value="P:response to oxygen-glucose deprivation"/>
    <property type="evidence" value="ECO:0000270"/>
    <property type="project" value="RGD"/>
</dbReference>
<dbReference type="GO" id="GO:0042594">
    <property type="term" value="P:response to starvation"/>
    <property type="evidence" value="ECO:0000270"/>
    <property type="project" value="RGD"/>
</dbReference>
<dbReference type="GO" id="GO:0006890">
    <property type="term" value="P:retrograde vesicle-mediated transport, Golgi to endoplasmic reticulum"/>
    <property type="evidence" value="ECO:0000318"/>
    <property type="project" value="GO_Central"/>
</dbReference>
<dbReference type="CDD" id="cd15865">
    <property type="entry name" value="SNARE_SEC20"/>
    <property type="match status" value="1"/>
</dbReference>
<dbReference type="InterPro" id="IPR005606">
    <property type="entry name" value="Sec20"/>
</dbReference>
<dbReference type="InterPro" id="IPR056173">
    <property type="entry name" value="Sec20_C"/>
</dbReference>
<dbReference type="PANTHER" id="PTHR12825">
    <property type="entry name" value="BNIP1-RELATED"/>
    <property type="match status" value="1"/>
</dbReference>
<dbReference type="PANTHER" id="PTHR12825:SF0">
    <property type="entry name" value="VESICLE TRANSPORT PROTEIN SEC20"/>
    <property type="match status" value="1"/>
</dbReference>
<dbReference type="Pfam" id="PF03908">
    <property type="entry name" value="Sec20"/>
    <property type="match status" value="1"/>
</dbReference>
<evidence type="ECO:0000250" key="1">
    <source>
        <dbReference type="UniProtKB" id="Q12981"/>
    </source>
</evidence>
<evidence type="ECO:0000255" key="2"/>
<evidence type="ECO:0000305" key="3"/>
<evidence type="ECO:0000312" key="4">
    <source>
        <dbReference type="EMBL" id="AAL50991.1"/>
    </source>
</evidence>
<evidence type="ECO:0000312" key="5">
    <source>
        <dbReference type="RGD" id="620799"/>
    </source>
</evidence>
<feature type="chain" id="PRO_0000232418" description="Vesicle transport protein SEC20">
    <location>
        <begin position="1"/>
        <end position="228"/>
    </location>
</feature>
<feature type="topological domain" description="Cytoplasmic" evidence="2">
    <location>
        <begin position="1"/>
        <end position="199"/>
    </location>
</feature>
<feature type="transmembrane region" description="Helical; Anchor for type IV membrane protein" evidence="2">
    <location>
        <begin position="200"/>
        <end position="220"/>
    </location>
</feature>
<feature type="topological domain" description="Lumenal" evidence="2">
    <location>
        <begin position="221"/>
        <end position="228"/>
    </location>
</feature>
<feature type="coiled-coil region" evidence="2">
    <location>
        <begin position="37"/>
        <end position="90"/>
    </location>
</feature>
<accession>Q8VHI8</accession>
<reference evidence="4" key="1">
    <citation type="submission" date="2001-11" db="EMBL/GenBank/DDBJ databases">
        <authorList>
            <person name="Itoh T."/>
            <person name="Itoh A."/>
            <person name="Pleasure D."/>
        </authorList>
    </citation>
    <scope>NUCLEOTIDE SEQUENCE [MRNA]</scope>
    <source>
        <strain evidence="4">Sprague-Dawley</strain>
    </source>
</reference>
<gene>
    <name evidence="4 5" type="primary">Bnip1</name>
    <name type="synonym">Sec20l</name>
</gene>
<organism>
    <name type="scientific">Rattus norvegicus</name>
    <name type="common">Rat</name>
    <dbReference type="NCBI Taxonomy" id="10116"/>
    <lineage>
        <taxon>Eukaryota</taxon>
        <taxon>Metazoa</taxon>
        <taxon>Chordata</taxon>
        <taxon>Craniata</taxon>
        <taxon>Vertebrata</taxon>
        <taxon>Euteleostomi</taxon>
        <taxon>Mammalia</taxon>
        <taxon>Eutheria</taxon>
        <taxon>Euarchontoglires</taxon>
        <taxon>Glires</taxon>
        <taxon>Rodentia</taxon>
        <taxon>Myomorpha</taxon>
        <taxon>Muroidea</taxon>
        <taxon>Muridae</taxon>
        <taxon>Murinae</taxon>
        <taxon>Rattus</taxon>
    </lineage>
</organism>
<comment type="function">
    <text evidence="1">As part of a SNARE complex may be involved in endoplasmic reticulum membranes fusion and be required for the maintenance of endoplasmic reticulum organization. Also plays a role in apoptosis. It is for instance required for endoplasmic reticulum stress-induced apoptosis. As a substrate of RNF185 interacting with SQSTM1, might also be involved in mitochondrial autophagy.</text>
</comment>
<comment type="subunit">
    <text evidence="1">Component of a SNARE complex consisting of STX18, USE1L, BNIP1/SEC20L and SEC22B. Interacts directly with STX18, RINT1/TIP20L and NAPA. Interacts with ZW10 through RINT1. Interacts with BCL2. Interacts with RNF186. Interacts with RNF185. Interacts with SQSTM1; increased by 'Lys-63'-linked polyubiquitination of BNIP1.</text>
</comment>
<comment type="subcellular location">
    <subcellularLocation>
        <location evidence="1">Endoplasmic reticulum membrane</location>
        <topology evidence="2">Single-pass type IV membrane protein</topology>
    </subcellularLocation>
    <subcellularLocation>
        <location evidence="1">Mitochondrion membrane</location>
        <topology evidence="2">Single-pass type IV membrane protein</topology>
    </subcellularLocation>
    <text evidence="1">Localization to the mitochondrion is regulated by RNF186.</text>
</comment>
<comment type="PTM">
    <text evidence="1">Polyubiquitinated. 'Lys-63'-linked polyubiquitination by RNF185 increases the interaction with the autophagy receptor SQSTM1. Undergoes 'Lys-29'- and 'Lys-63'-linked polyubiquitination by RNF186 that may regulate BNIP1 localization to the mitochondrion.</text>
</comment>
<comment type="similarity">
    <text evidence="3">Belongs to the SEC20 family.</text>
</comment>
<name>SEC20_RAT</name>
<proteinExistence type="evidence at transcript level"/>
<sequence>MAAPQDVHVRICNQEIVKFDLEVKALIQDIRDCSGPLSELTELNTKVKEKFQQLKHRIQELEQSAKEQDKESEKQLLLQEVENHKKQMLSNQTSWRKANLTCKLAIDNLEKAELLQGGDSLRQRKTTKESLAQTSSTITESLMGISRMMSQQVQQSEEAMQTLVSSSRTLLDANEEFKSMSGTIQLGRKLITKYNRRELTDKLLIFLALALFLATVLYIVKKRLFPFL</sequence>
<protein>
    <recommendedName>
        <fullName>Vesicle transport protein SEC20</fullName>
    </recommendedName>
</protein>